<dbReference type="EMBL" id="CP001016">
    <property type="protein sequence ID" value="ACB96350.1"/>
    <property type="molecule type" value="Genomic_DNA"/>
</dbReference>
<dbReference type="RefSeq" id="WP_012385701.1">
    <property type="nucleotide sequence ID" value="NC_010581.1"/>
</dbReference>
<dbReference type="SMR" id="B2IJX5"/>
<dbReference type="STRING" id="395963.Bind_2778"/>
<dbReference type="KEGG" id="bid:Bind_2778"/>
<dbReference type="eggNOG" id="COG0711">
    <property type="taxonomic scope" value="Bacteria"/>
</dbReference>
<dbReference type="eggNOG" id="COG0712">
    <property type="taxonomic scope" value="Bacteria"/>
</dbReference>
<dbReference type="HOGENOM" id="CLU_070737_0_0_5"/>
<dbReference type="OrthoDB" id="466272at2"/>
<dbReference type="Proteomes" id="UP000001695">
    <property type="component" value="Chromosome"/>
</dbReference>
<dbReference type="GO" id="GO:0005886">
    <property type="term" value="C:plasma membrane"/>
    <property type="evidence" value="ECO:0007669"/>
    <property type="project" value="UniProtKB-SubCell"/>
</dbReference>
<dbReference type="GO" id="GO:0045259">
    <property type="term" value="C:proton-transporting ATP synthase complex"/>
    <property type="evidence" value="ECO:0007669"/>
    <property type="project" value="UniProtKB-KW"/>
</dbReference>
<dbReference type="GO" id="GO:0046933">
    <property type="term" value="F:proton-transporting ATP synthase activity, rotational mechanism"/>
    <property type="evidence" value="ECO:0007669"/>
    <property type="project" value="UniProtKB-UniRule"/>
</dbReference>
<dbReference type="GO" id="GO:0046961">
    <property type="term" value="F:proton-transporting ATPase activity, rotational mechanism"/>
    <property type="evidence" value="ECO:0007669"/>
    <property type="project" value="TreeGrafter"/>
</dbReference>
<dbReference type="CDD" id="cd06503">
    <property type="entry name" value="ATP-synt_Fo_b"/>
    <property type="match status" value="1"/>
</dbReference>
<dbReference type="HAMAP" id="MF_01398">
    <property type="entry name" value="ATP_synth_b_bprime"/>
    <property type="match status" value="1"/>
</dbReference>
<dbReference type="InterPro" id="IPR002146">
    <property type="entry name" value="ATP_synth_b/b'su_bac/chlpt"/>
</dbReference>
<dbReference type="InterPro" id="IPR050059">
    <property type="entry name" value="ATP_synthase_B_chain"/>
</dbReference>
<dbReference type="PANTHER" id="PTHR33445">
    <property type="entry name" value="ATP SYNTHASE SUBUNIT B', CHLOROPLASTIC"/>
    <property type="match status" value="1"/>
</dbReference>
<dbReference type="PANTHER" id="PTHR33445:SF2">
    <property type="entry name" value="ATP SYNTHASE SUBUNIT B', CHLOROPLASTIC"/>
    <property type="match status" value="1"/>
</dbReference>
<dbReference type="Pfam" id="PF00430">
    <property type="entry name" value="ATP-synt_B"/>
    <property type="match status" value="1"/>
</dbReference>
<comment type="function">
    <text evidence="1">F(1)F(0) ATP synthase produces ATP from ADP in the presence of a proton or sodium gradient. F-type ATPases consist of two structural domains, F(1) containing the extramembraneous catalytic core and F(0) containing the membrane proton channel, linked together by a central stalk and a peripheral stalk. During catalysis, ATP synthesis in the catalytic domain of F(1) is coupled via a rotary mechanism of the central stalk subunits to proton translocation.</text>
</comment>
<comment type="function">
    <text evidence="1">Component of the F(0) channel, it forms part of the peripheral stalk, linking F(1) to F(0).</text>
</comment>
<comment type="subunit">
    <text evidence="1">F-type ATPases have 2 components, F(1) - the catalytic core - and F(0) - the membrane proton channel. F(1) has five subunits: alpha(3), beta(3), gamma(1), delta(1), epsilon(1). F(0) has three main subunits: a(1), b(2) and c(10-14). The alpha and beta chains form an alternating ring which encloses part of the gamma chain. F(1) is attached to F(0) by a central stalk formed by the gamma and epsilon chains, while a peripheral stalk is formed by the delta and b chains.</text>
</comment>
<comment type="subcellular location">
    <subcellularLocation>
        <location evidence="1">Cell inner membrane</location>
        <topology evidence="1">Single-pass membrane protein</topology>
    </subcellularLocation>
</comment>
<comment type="similarity">
    <text evidence="1">Belongs to the ATPase B chain family.</text>
</comment>
<protein>
    <recommendedName>
        <fullName evidence="1">ATP synthase subunit b 3</fullName>
    </recommendedName>
    <alternativeName>
        <fullName evidence="1">ATP synthase F(0) sector subunit b 3</fullName>
    </alternativeName>
    <alternativeName>
        <fullName evidence="1">ATPase subunit I 3</fullName>
    </alternativeName>
    <alternativeName>
        <fullName evidence="1">F-type ATPase subunit b 3</fullName>
        <shortName evidence="1">F-ATPase subunit b 3</shortName>
    </alternativeName>
</protein>
<sequence>MHIDWWTLGLQAINVLILIWILSRFLFKPVAAIVEARRASIARLLDEAHATRVAAEAEREKARQEVTSLATARAAALQKAEDEAKAETETILANARSEAGKLREAAKADIARARQDEAAAMADHASQLAVDIAGKLLSRLPEEARISGFIEGLAQGLAALPEAIRTNIGATDAPVQLKAARALTEAETQACRVRLSEALGHPAEIAVDVRPELIAGLEIDMPHAVVRNSFRADLTRITAALIQTGSMQTGQEAPRPETP</sequence>
<organism>
    <name type="scientific">Beijerinckia indica subsp. indica (strain ATCC 9039 / DSM 1715 / NCIMB 8712)</name>
    <dbReference type="NCBI Taxonomy" id="395963"/>
    <lineage>
        <taxon>Bacteria</taxon>
        <taxon>Pseudomonadati</taxon>
        <taxon>Pseudomonadota</taxon>
        <taxon>Alphaproteobacteria</taxon>
        <taxon>Hyphomicrobiales</taxon>
        <taxon>Beijerinckiaceae</taxon>
        <taxon>Beijerinckia</taxon>
    </lineage>
</organism>
<gene>
    <name evidence="1" type="primary">atpF3</name>
    <name type="ordered locus">Bind_2778</name>
</gene>
<reference key="1">
    <citation type="journal article" date="2010" name="J. Bacteriol.">
        <title>Complete genome sequence of Beijerinckia indica subsp. indica.</title>
        <authorList>
            <person name="Tamas I."/>
            <person name="Dedysh S.N."/>
            <person name="Liesack W."/>
            <person name="Stott M.B."/>
            <person name="Alam M."/>
            <person name="Murrell J.C."/>
            <person name="Dunfield P.F."/>
        </authorList>
    </citation>
    <scope>NUCLEOTIDE SEQUENCE [LARGE SCALE GENOMIC DNA]</scope>
    <source>
        <strain>ATCC 9039 / DSM 1715 / NCIMB 8712</strain>
    </source>
</reference>
<name>ATPF3_BEII9</name>
<proteinExistence type="inferred from homology"/>
<keyword id="KW-0066">ATP synthesis</keyword>
<keyword id="KW-0997">Cell inner membrane</keyword>
<keyword id="KW-1003">Cell membrane</keyword>
<keyword id="KW-0138">CF(0)</keyword>
<keyword id="KW-0375">Hydrogen ion transport</keyword>
<keyword id="KW-0406">Ion transport</keyword>
<keyword id="KW-0472">Membrane</keyword>
<keyword id="KW-1185">Reference proteome</keyword>
<keyword id="KW-0812">Transmembrane</keyword>
<keyword id="KW-1133">Transmembrane helix</keyword>
<keyword id="KW-0813">Transport</keyword>
<feature type="chain" id="PRO_0000368351" description="ATP synthase subunit b 3">
    <location>
        <begin position="1"/>
        <end position="259"/>
    </location>
</feature>
<feature type="transmembrane region" description="Helical" evidence="1">
    <location>
        <begin position="5"/>
        <end position="27"/>
    </location>
</feature>
<evidence type="ECO:0000255" key="1">
    <source>
        <dbReference type="HAMAP-Rule" id="MF_01398"/>
    </source>
</evidence>
<accession>B2IJX5</accession>